<feature type="chain" id="PRO_0000046199" description="Sarcoplasmic/endoplasmic reticulum calcium ATPase 2">
    <location>
        <begin position="1"/>
        <end position="1042"/>
    </location>
</feature>
<feature type="topological domain" description="Cytoplasmic" evidence="11">
    <location>
        <begin position="1"/>
        <end position="48"/>
    </location>
</feature>
<feature type="transmembrane region" description="Helical; Name=1" evidence="4">
    <location>
        <begin position="49"/>
        <end position="69"/>
    </location>
</feature>
<feature type="topological domain" description="Lumenal" evidence="11">
    <location>
        <begin position="70"/>
        <end position="89"/>
    </location>
</feature>
<feature type="transmembrane region" description="Helical; Name=2" evidence="4">
    <location>
        <begin position="90"/>
        <end position="110"/>
    </location>
</feature>
<feature type="topological domain" description="Cytoplasmic" evidence="11">
    <location>
        <begin position="111"/>
        <end position="253"/>
    </location>
</feature>
<feature type="transmembrane region" description="Helical; Name=3" evidence="4">
    <location>
        <begin position="254"/>
        <end position="273"/>
    </location>
</feature>
<feature type="topological domain" description="Lumenal" evidence="11">
    <location>
        <begin position="274"/>
        <end position="295"/>
    </location>
</feature>
<feature type="transmembrane region" description="Helical; Name=4" evidence="4">
    <location>
        <begin position="296"/>
        <end position="313"/>
    </location>
</feature>
<feature type="topological domain" description="Cytoplasmic" evidence="11">
    <location>
        <begin position="314"/>
        <end position="756"/>
    </location>
</feature>
<feature type="transmembrane region" description="Helical; Name=5" evidence="4">
    <location>
        <begin position="757"/>
        <end position="776"/>
    </location>
</feature>
<feature type="topological domain" description="Lumenal" evidence="11">
    <location>
        <begin position="777"/>
        <end position="786"/>
    </location>
</feature>
<feature type="transmembrane region" description="Helical; Name=6" evidence="4">
    <location>
        <begin position="787"/>
        <end position="807"/>
    </location>
</feature>
<feature type="topological domain" description="Cytoplasmic" evidence="11">
    <location>
        <begin position="808"/>
        <end position="827"/>
    </location>
</feature>
<feature type="transmembrane region" description="Helical; Name=7" evidence="4">
    <location>
        <begin position="828"/>
        <end position="850"/>
    </location>
</feature>
<feature type="topological domain" description="Lumenal" evidence="11">
    <location>
        <begin position="851"/>
        <end position="896"/>
    </location>
</feature>
<feature type="transmembrane region" description="Helical; Name=8" evidence="4">
    <location>
        <begin position="897"/>
        <end position="916"/>
    </location>
</feature>
<feature type="topological domain" description="Cytoplasmic" evidence="11">
    <location>
        <begin position="917"/>
        <end position="929"/>
    </location>
</feature>
<feature type="transmembrane region" description="Helical; Name=9" evidence="4">
    <location>
        <begin position="930"/>
        <end position="948"/>
    </location>
</feature>
<feature type="topological domain" description="Lumenal" evidence="11">
    <location>
        <begin position="949"/>
        <end position="963"/>
    </location>
</feature>
<feature type="transmembrane region" description="Helical; Name=10" evidence="4">
    <location>
        <begin position="964"/>
        <end position="984"/>
    </location>
</feature>
<feature type="topological domain" description="Cytoplasmic" evidence="11">
    <location>
        <begin position="985"/>
        <end position="1042"/>
    </location>
</feature>
<feature type="region of interest" description="Interaction with HAX1" evidence="1">
    <location>
        <begin position="575"/>
        <end position="594"/>
    </location>
</feature>
<feature type="region of interest" description="Interaction with PLN" evidence="4">
    <location>
        <begin position="787"/>
        <end position="807"/>
    </location>
</feature>
<feature type="region of interest" description="Interaction with TMEM64 and PDIA3" evidence="3">
    <location>
        <begin position="788"/>
        <end position="1042"/>
    </location>
</feature>
<feature type="region of interest" description="Interaction with PLN" evidence="4">
    <location>
        <begin position="931"/>
        <end position="942"/>
    </location>
</feature>
<feature type="active site" description="4-aspartylphosphate intermediate" evidence="4">
    <location>
        <position position="351"/>
    </location>
</feature>
<feature type="binding site" evidence="5">
    <location>
        <position position="304"/>
    </location>
    <ligand>
        <name>Ca(2+)</name>
        <dbReference type="ChEBI" id="CHEBI:29108"/>
        <label>1</label>
    </ligand>
</feature>
<feature type="binding site" evidence="5">
    <location>
        <position position="305"/>
    </location>
    <ligand>
        <name>Ca(2+)</name>
        <dbReference type="ChEBI" id="CHEBI:29108"/>
        <label>1</label>
    </ligand>
</feature>
<feature type="binding site" evidence="5">
    <location>
        <position position="307"/>
    </location>
    <ligand>
        <name>Ca(2+)</name>
        <dbReference type="ChEBI" id="CHEBI:29108"/>
        <label>1</label>
    </ligand>
</feature>
<feature type="binding site" evidence="5">
    <location>
        <position position="309"/>
    </location>
    <ligand>
        <name>Ca(2+)</name>
        <dbReference type="ChEBI" id="CHEBI:29108"/>
        <label>1</label>
    </ligand>
</feature>
<feature type="binding site" evidence="5">
    <location>
        <position position="351"/>
    </location>
    <ligand>
        <name>Mg(2+)</name>
        <dbReference type="ChEBI" id="CHEBI:18420"/>
    </ligand>
</feature>
<feature type="binding site" evidence="5">
    <location>
        <position position="353"/>
    </location>
    <ligand>
        <name>ATP</name>
        <dbReference type="ChEBI" id="CHEBI:30616"/>
    </ligand>
</feature>
<feature type="binding site" evidence="5">
    <location>
        <position position="353"/>
    </location>
    <ligand>
        <name>Mg(2+)</name>
        <dbReference type="ChEBI" id="CHEBI:18420"/>
    </ligand>
</feature>
<feature type="binding site" evidence="5">
    <location>
        <position position="442"/>
    </location>
    <ligand>
        <name>ATP</name>
        <dbReference type="ChEBI" id="CHEBI:30616"/>
    </ligand>
</feature>
<feature type="binding site" evidence="5">
    <location>
        <position position="489"/>
    </location>
    <ligand>
        <name>ATP</name>
        <dbReference type="ChEBI" id="CHEBI:30616"/>
    </ligand>
</feature>
<feature type="binding site" evidence="5">
    <location>
        <position position="514"/>
    </location>
    <ligand>
        <name>ATP</name>
        <dbReference type="ChEBI" id="CHEBI:30616"/>
    </ligand>
</feature>
<feature type="binding site" evidence="4">
    <location>
        <position position="559"/>
    </location>
    <ligand>
        <name>ATP</name>
        <dbReference type="ChEBI" id="CHEBI:30616"/>
    </ligand>
</feature>
<feature type="binding site" evidence="4">
    <location>
        <position position="624"/>
    </location>
    <ligand>
        <name>ATP</name>
        <dbReference type="ChEBI" id="CHEBI:30616"/>
    </ligand>
</feature>
<feature type="binding site" evidence="4">
    <location>
        <position position="625"/>
    </location>
    <ligand>
        <name>ATP</name>
        <dbReference type="ChEBI" id="CHEBI:30616"/>
    </ligand>
</feature>
<feature type="binding site" evidence="5">
    <location>
        <position position="626"/>
    </location>
    <ligand>
        <name>ATP</name>
        <dbReference type="ChEBI" id="CHEBI:30616"/>
    </ligand>
</feature>
<feature type="binding site" evidence="5">
    <location>
        <position position="677"/>
    </location>
    <ligand>
        <name>ATP</name>
        <dbReference type="ChEBI" id="CHEBI:30616"/>
    </ligand>
</feature>
<feature type="binding site" evidence="4">
    <location>
        <position position="683"/>
    </location>
    <ligand>
        <name>ATP</name>
        <dbReference type="ChEBI" id="CHEBI:30616"/>
    </ligand>
</feature>
<feature type="binding site" evidence="5">
    <location>
        <position position="702"/>
    </location>
    <ligand>
        <name>Mg(2+)</name>
        <dbReference type="ChEBI" id="CHEBI:18420"/>
    </ligand>
</feature>
<feature type="binding site" evidence="5">
    <location>
        <position position="705"/>
    </location>
    <ligand>
        <name>ATP</name>
        <dbReference type="ChEBI" id="CHEBI:30616"/>
    </ligand>
</feature>
<feature type="binding site" evidence="5">
    <location>
        <position position="767"/>
    </location>
    <ligand>
        <name>Ca(2+)</name>
        <dbReference type="ChEBI" id="CHEBI:29108"/>
        <label>2</label>
    </ligand>
</feature>
<feature type="binding site" evidence="5">
    <location>
        <position position="770"/>
    </location>
    <ligand>
        <name>Ca(2+)</name>
        <dbReference type="ChEBI" id="CHEBI:29108"/>
        <label>2</label>
    </ligand>
</feature>
<feature type="binding site" evidence="5">
    <location>
        <position position="795"/>
    </location>
    <ligand>
        <name>Ca(2+)</name>
        <dbReference type="ChEBI" id="CHEBI:29108"/>
        <label>1</label>
    </ligand>
</feature>
<feature type="binding site" evidence="5">
    <location>
        <position position="798"/>
    </location>
    <ligand>
        <name>Ca(2+)</name>
        <dbReference type="ChEBI" id="CHEBI:29108"/>
        <label>2</label>
    </ligand>
</feature>
<feature type="binding site" evidence="5">
    <location>
        <position position="799"/>
    </location>
    <ligand>
        <name>Ca(2+)</name>
        <dbReference type="ChEBI" id="CHEBI:29108"/>
        <label>1</label>
    </ligand>
</feature>
<feature type="binding site" evidence="5">
    <location>
        <position position="799"/>
    </location>
    <ligand>
        <name>Ca(2+)</name>
        <dbReference type="ChEBI" id="CHEBI:29108"/>
        <label>2</label>
    </ligand>
</feature>
<feature type="binding site" evidence="4">
    <location>
        <position position="907"/>
    </location>
    <ligand>
        <name>Ca(2+)</name>
        <dbReference type="ChEBI" id="CHEBI:29108"/>
        <label>2</label>
    </ligand>
</feature>
<feature type="modified residue" description="Phosphoserine" evidence="3">
    <location>
        <position position="38"/>
    </location>
</feature>
<feature type="modified residue" description="3'-nitrotyrosine" evidence="6">
    <location>
        <position position="294"/>
    </location>
</feature>
<feature type="modified residue" description="3'-nitrotyrosine" evidence="6">
    <location>
        <position position="295"/>
    </location>
</feature>
<feature type="modified residue" description="Phosphothreonine" evidence="7">
    <location>
        <position position="441"/>
    </location>
</feature>
<feature type="modified residue" description="Phosphoserine" evidence="3">
    <location>
        <position position="531"/>
    </location>
</feature>
<feature type="modified residue" description="Phosphoserine" evidence="6">
    <location>
        <position position="580"/>
    </location>
</feature>
<feature type="modified residue" description="Phosphoserine" evidence="6">
    <location>
        <position position="663"/>
    </location>
</feature>
<feature type="disulfide bond" evidence="5">
    <location>
        <begin position="875"/>
        <end position="887"/>
    </location>
</feature>
<feature type="splice variant" id="VSP_000361" description="In isoform 2." evidence="10">
    <original>GKECVQPAPQSCSLWACTEGVSWPFVLLIVPLVMWVYSTDTNFSDLLWS</original>
    <variation>AILE</variation>
    <location>
        <begin position="994"/>
        <end position="1042"/>
    </location>
</feature>
<feature type="sequence conflict" description="In Ref. 1; AAA31150." evidence="11" ref="1">
    <original>K</original>
    <variation>E</variation>
    <location>
        <position position="578"/>
    </location>
</feature>
<protein>
    <recommendedName>
        <fullName>Sarcoplasmic/endoplasmic reticulum calcium ATPase 2</fullName>
        <shortName>SERCA2</shortName>
        <shortName>SR Ca(2+)-ATPase 2</shortName>
        <ecNumber>7.2.2.10</ecNumber>
    </recommendedName>
    <alternativeName>
        <fullName>Calcium pump 2</fullName>
    </alternativeName>
    <alternativeName>
        <fullName>Calcium-transporting ATPase sarcoplasmic reticulum type, slow twitch skeletal muscle isoform</fullName>
    </alternativeName>
    <alternativeName>
        <fullName>Endoplasmic reticulum class 1/2 Ca(2+) ATPase</fullName>
    </alternativeName>
</protein>
<evidence type="ECO:0000250" key="1"/>
<evidence type="ECO:0000250" key="2">
    <source>
        <dbReference type="UniProtKB" id="O46674"/>
    </source>
</evidence>
<evidence type="ECO:0000250" key="3">
    <source>
        <dbReference type="UniProtKB" id="O55143"/>
    </source>
</evidence>
<evidence type="ECO:0000250" key="4">
    <source>
        <dbReference type="UniProtKB" id="P04191"/>
    </source>
</evidence>
<evidence type="ECO:0000250" key="5">
    <source>
        <dbReference type="UniProtKB" id="P11607"/>
    </source>
</evidence>
<evidence type="ECO:0000250" key="6">
    <source>
        <dbReference type="UniProtKB" id="P16615"/>
    </source>
</evidence>
<evidence type="ECO:0000250" key="7">
    <source>
        <dbReference type="UniProtKB" id="Q64578"/>
    </source>
</evidence>
<evidence type="ECO:0000250" key="8">
    <source>
        <dbReference type="UniProtKB" id="Q8R429"/>
    </source>
</evidence>
<evidence type="ECO:0000255" key="9"/>
<evidence type="ECO:0000303" key="10">
    <source>
    </source>
</evidence>
<evidence type="ECO:0000305" key="11"/>
<accession>P20647</accession>
<accession>P04192</accession>
<gene>
    <name type="primary">ATP2A2</name>
</gene>
<comment type="function">
    <text evidence="3 6">This magnesium-dependent enzyme catalyzes the hydrolysis of ATP coupled with the translocation of calcium from the cytosol to the sarcoplasmic reticulum lumen. Involved in autophagy in response to starvation. Upon interaction with VMP1 and activation, controls ER-isolation membrane contacts for autophagosome formation. Also modulates ER contacts with lipid droplets, mitochondria and endosomes (By similarity). In coordination with FLVCR2 mediates heme-stimulated switching from mitochondrial ATP synthesis to thermogenesis (By similarity).</text>
</comment>
<comment type="function">
    <molecule>Isoform 2</molecule>
    <text evidence="3">Involved in the regulation of the contraction/relaxation cycle. Acts as a regulator of TNFSF11-mediated Ca(2+) signaling pathways via its interaction with TMEM64 which is critical for the TNFSF11-induced CREB1 activation and mitochondrial ROS generation necessary for proper osteoclast generation. Association between TMEM64 and SERCA2 in the ER leads to cytosolic Ca(2+) spiking for activation of NFATC1 and production of mitochondrial ROS, thereby triggering Ca(2+) signaling cascades that promote osteoclast differentiation and activation.</text>
</comment>
<comment type="catalytic activity">
    <reaction evidence="6">
        <text>Ca(2+)(in) + ATP + H2O = Ca(2+)(out) + ADP + phosphate + H(+)</text>
        <dbReference type="Rhea" id="RHEA:18105"/>
        <dbReference type="ChEBI" id="CHEBI:15377"/>
        <dbReference type="ChEBI" id="CHEBI:15378"/>
        <dbReference type="ChEBI" id="CHEBI:29108"/>
        <dbReference type="ChEBI" id="CHEBI:30616"/>
        <dbReference type="ChEBI" id="CHEBI:43474"/>
        <dbReference type="ChEBI" id="CHEBI:456216"/>
        <dbReference type="EC" id="7.2.2.10"/>
    </reaction>
    <physiologicalReaction direction="left-to-right" evidence="6">
        <dbReference type="Rhea" id="RHEA:18106"/>
    </physiologicalReaction>
</comment>
<comment type="cofactor">
    <cofactor evidence="5">
        <name>Mg(2+)</name>
        <dbReference type="ChEBI" id="CHEBI:18420"/>
    </cofactor>
</comment>
<comment type="activity regulation">
    <text evidence="2 3 4 6 8">Has different conformational states with differential Ca2+ affinity. The E1 conformational state (active form) shows high Ca(2+) affinity, while the E2 state exhibits low Ca(2+) affinity. Binding of ATP allosterically increases its affinity for subsequent binding of Ca2+. Reversibly inhibited by phospholamban (PLN) at low calcium concentrations. PLN inhibits ATP2A2 Ca(2+) affinity by disrupting its allosteric activation by ATP. Inhibited by sarcolipin (SLN) and myoregulin (MRLN). The inhibition is blocked by VMP1. Enhanced by STRIT1/DWORF; STRIT1 increases activity by displacing sarcolipin (SLN), phospholamban (PLN) and myoregulin (MRLN). Stabilizes SERCA2 in its E2 state.</text>
</comment>
<comment type="subunit">
    <text evidence="3 4 6 8">Interacts with sarcolipin (SLN); the interaction inhibits ATP2A2 Ca(2+) affinity. Interacts with phospholamban (PLN); the interaction inhibits ATP2A2 Ca(2+) affinity (By similarity). Interacts with myoregulin (MRLN) (By similarity). Interacts with ARLN and ERLN; the interactions inhibit ATP2A2 Ca(2+) affinity (By similarity). Interacts with SRTIT1/DWORF; the interaction results in activation of ATP2A2 (By similarity). Interacts with the monomeric forms of SLN, PLN, ARLN, ERLN and STRI1/DWORF (By similarity). Interacts with HAX1 (By similarity). Interacts with S100A8 and S100A9 (By similarity). Interacts with SLC35G1 and STIM1. Interacts with TMEM203 (By similarity). Interacts with TMEM64 and PDIA3 (By similarity). Interacts with TMX1 (By similarity). Interacts with TMX2 (By similarity). Interacts with VMP1; VMP1 competes with PLN and SLN to prevent them from forming an inhibitory complex with ATP2A2. Interacts with ULK1 (By similarity). Interacts with TUNAR (By similarity). Interacts with FLVCR2; this interaction occurs in the absence of heme and promotes ATP2A2 proteasomal degradation; this complex is dissociated upon heme binding. Interacts with FNIP1.</text>
</comment>
<comment type="subunit">
    <molecule>Isoform 1</molecule>
    <text evidence="6">Interacts with TRAM2 (via C-terminus).</text>
</comment>
<comment type="subcellular location">
    <subcellularLocation>
        <location evidence="3">Endoplasmic reticulum membrane</location>
        <topology evidence="9">Multi-pass membrane protein</topology>
    </subcellularLocation>
    <subcellularLocation>
        <location evidence="3">Sarcoplasmic reticulum membrane</location>
        <topology evidence="9">Multi-pass membrane protein</topology>
    </subcellularLocation>
    <text evidence="3">Colocalizes with FLVCR2 at the mitochondrial-ER contact junction.</text>
</comment>
<comment type="alternative products">
    <event type="alternative splicing"/>
    <isoform>
        <id>P20647-1</id>
        <name>1</name>
        <name>ATP2A2B</name>
        <name>SERCA2b</name>
        <sequence type="displayed"/>
    </isoform>
    <isoform>
        <id>P20647-2</id>
        <name>2</name>
        <name>ATP2A2A</name>
        <name>SERCA2a</name>
        <sequence type="described" ref="VSP_000361"/>
    </isoform>
</comment>
<comment type="tissue specificity">
    <text>Isoform 2 is highly expressed in heart and slow twitch skeletal muscle. Isoform 1 is widely expressed.</text>
</comment>
<comment type="domain">
    <text evidence="4">Ca(2+) and ATP binding cause major rearrangements of the cytoplasmic and transmembrane domains. According to the E1-E2 model, Ca(2+) binding to the cytosolic domain of the pump in the high-affinity E1 conformation is followed by the ATP-dependent phosphorylation of the active site Asp, giving rise to E1P. A conformational change of the phosphoenzyme gives rise to the low-affinity E2P state that exposes the Ca(2+) ions to the lumenal side and promotes Ca(2+) release. Dephosphorylation of the active site Asp mediates the subsequent return to the E1 conformation.</text>
</comment>
<comment type="domain">
    <text evidence="4">PLN and SLN both have a single transmembrane helix; both occupy a similar binding site on ATP2A1 that is situated between the ATP2A1 transmembrane helices.</text>
</comment>
<comment type="PTM">
    <text evidence="6">Nitrated under oxidative stress. Nitration on the two tyrosine residues inhibits catalytic activity.</text>
</comment>
<comment type="PTM">
    <text evidence="3">Serotonylated on Gln residues by TGM2 in response to hypoxia, leading to its inactivation.</text>
</comment>
<comment type="similarity">
    <text evidence="11">Belongs to the cation transport ATPase (P-type) (TC 3.A.3) family. Type IIA subfamily.</text>
</comment>
<proteinExistence type="evidence at transcript level"/>
<sequence length="1042" mass="114705">MENAHTKTVEEVLGHFGVNESTGLSLEQVKKLKERWGSNELPAEEGKTLLELVIEQFEDLLVRILLLAACISFVLAWFEEGEETITAFVEPFVILLILVANAIVGVWQERNAENAIEALKEYEPEMGKVYRQDRKSVQRIKAKDIVPGDIVEIAVGDKVPADIRLTSIKSTTLRVDQSILTGESVSVIKHTDPVPDPRAVNQDKKNMLFSGTNIAAGKAMGVVVATGVNTEIGKIRDEMVATEQERTPLQQKLDEFGEQLSKVISLICIAVWIINIGHFNDPVHGGSWIRGAIYYFKIAVALAVAAIPEGLPAVITTCLALGTRRMAKKNAIVRSLPSVETLGCTSVICSDKTGTLTTNQMSVCRMFILDKVDGDTCSLNEFTITGSTYAPIGEVHKDDKPVKCHQYDGLVELATICALCNDSALDYNEAKGVYEKVGEATETALTCLVEKMNVFDTELKGLSKIERANACNSVIKQLMKKEFTLEFSRDRKSMSVYCTPNKPSRTSMSKMFVKGAPEGVIDRCTHIRVGSTKVPMTAGVKQKIMSVIREWGSGSDTLRCLALATHDNPLRREEMHLKDSANFIKYETNLTFVGCVGMLDPPRIEVASSVKLCRQAGIRVIMITGDNKGTAVAICRRIGIFGQEEDVTAKAFTGREFDELNPSAQRDACLNARCFARVEPSHKSKIVEFLQSFDEITAMTGDGVNDAPALKKAEIGIAMGSGTAVAKTASEMVLADDNFSTIVAAVEEGRAIYNNMKQFIRYLISSNVGEVVCIFLTAALGFPEALIPVQLLWVNLVTDGLPATALGFNPPDLDIMNKPPRNPKEPLISGWLFFRYLAIGCYVGAATVGAAAWWFIAADGGPRVSFYQLSHFLQCKEDNPDFEGVDCAIFESPYPMTMALSVLVTIEMCNALNSLSENQSLLRMPPWENIWLVGSICLSMSLHFLILYVEPLPLIFQITPLNVTQWLMVLKISLPVILMDETLKFVARNYLEPGKECVQPAPQSCSLWACTEGVSWPFVLLIVPLVMWVYSTDTNFSDLLWS</sequence>
<dbReference type="EC" id="7.2.2.10"/>
<dbReference type="EMBL" id="J04703">
    <property type="protein sequence ID" value="AAA31150.1"/>
    <property type="molecule type" value="mRNA"/>
</dbReference>
<dbReference type="EMBL" id="X52496">
    <property type="protein sequence ID" value="CAA36737.1"/>
    <property type="molecule type" value="mRNA"/>
</dbReference>
<dbReference type="EMBL" id="X02814">
    <property type="protein sequence ID" value="CAA26583.1"/>
    <property type="molecule type" value="mRNA"/>
</dbReference>
<dbReference type="PIR" id="A01076">
    <property type="entry name" value="PWRBSC"/>
</dbReference>
<dbReference type="PIR" id="A33881">
    <property type="entry name" value="A33881"/>
</dbReference>
<dbReference type="PIR" id="S10335">
    <property type="entry name" value="PWRBMC"/>
</dbReference>
<dbReference type="RefSeq" id="NP_001082790.1">
    <property type="nucleotide sequence ID" value="NM_001089321.1"/>
</dbReference>
<dbReference type="SMR" id="P20647"/>
<dbReference type="FunCoup" id="P20647">
    <property type="interactions" value="1516"/>
</dbReference>
<dbReference type="STRING" id="9986.ENSOCUP00000038801"/>
<dbReference type="PaxDb" id="9986-ENSOCUP00000016205"/>
<dbReference type="GeneID" id="100038308"/>
<dbReference type="KEGG" id="ocu:100038308"/>
<dbReference type="CTD" id="488"/>
<dbReference type="eggNOG" id="KOG0202">
    <property type="taxonomic scope" value="Eukaryota"/>
</dbReference>
<dbReference type="InParanoid" id="P20647"/>
<dbReference type="OrthoDB" id="3352408at2759"/>
<dbReference type="BRENDA" id="7.2.2.10">
    <property type="organism ID" value="1749"/>
</dbReference>
<dbReference type="Proteomes" id="UP000001811">
    <property type="component" value="Unplaced"/>
</dbReference>
<dbReference type="GO" id="GO:0033017">
    <property type="term" value="C:sarcoplasmic reticulum membrane"/>
    <property type="evidence" value="ECO:0007669"/>
    <property type="project" value="UniProtKB-SubCell"/>
</dbReference>
<dbReference type="GO" id="GO:0005524">
    <property type="term" value="F:ATP binding"/>
    <property type="evidence" value="ECO:0007669"/>
    <property type="project" value="UniProtKB-KW"/>
</dbReference>
<dbReference type="GO" id="GO:0016887">
    <property type="term" value="F:ATP hydrolysis activity"/>
    <property type="evidence" value="ECO:0007669"/>
    <property type="project" value="InterPro"/>
</dbReference>
<dbReference type="GO" id="GO:0046872">
    <property type="term" value="F:metal ion binding"/>
    <property type="evidence" value="ECO:0007669"/>
    <property type="project" value="UniProtKB-KW"/>
</dbReference>
<dbReference type="GO" id="GO:0086039">
    <property type="term" value="F:P-type calcium transporter activity involved in regulation of cardiac muscle cell membrane potential"/>
    <property type="evidence" value="ECO:0000250"/>
    <property type="project" value="UniProtKB"/>
</dbReference>
<dbReference type="GO" id="GO:0000045">
    <property type="term" value="P:autophagosome assembly"/>
    <property type="evidence" value="ECO:0000250"/>
    <property type="project" value="UniProtKB"/>
</dbReference>
<dbReference type="GO" id="GO:0016240">
    <property type="term" value="P:autophagosome membrane docking"/>
    <property type="evidence" value="ECO:0000250"/>
    <property type="project" value="UniProtKB"/>
</dbReference>
<dbReference type="GO" id="GO:0070588">
    <property type="term" value="P:calcium ion transmembrane transport"/>
    <property type="evidence" value="ECO:0000250"/>
    <property type="project" value="UniProtKB"/>
</dbReference>
<dbReference type="GO" id="GO:1990456">
    <property type="term" value="P:mitochondrion-endoplasmic reticulum membrane tethering"/>
    <property type="evidence" value="ECO:0000250"/>
    <property type="project" value="UniProtKB"/>
</dbReference>
<dbReference type="GO" id="GO:0140056">
    <property type="term" value="P:organelle localization by membrane tethering"/>
    <property type="evidence" value="ECO:0000250"/>
    <property type="project" value="UniProtKB"/>
</dbReference>
<dbReference type="CDD" id="cd02083">
    <property type="entry name" value="P-type_ATPase_SERCA"/>
    <property type="match status" value="1"/>
</dbReference>
<dbReference type="FunFam" id="2.70.150.10:FF:000143">
    <property type="entry name" value="Calcium-transporting ATPase"/>
    <property type="match status" value="1"/>
</dbReference>
<dbReference type="FunFam" id="3.40.1110.10:FF:000003">
    <property type="entry name" value="Calcium-transporting ATPase"/>
    <property type="match status" value="1"/>
</dbReference>
<dbReference type="FunFam" id="3.40.50.1000:FF:000005">
    <property type="entry name" value="Calcium-transporting ATPase 1"/>
    <property type="match status" value="1"/>
</dbReference>
<dbReference type="FunFam" id="1.20.1110.10:FF:000065">
    <property type="entry name" value="Sarcoplasmic/endoplasmic reticulum calcium ATPase 1"/>
    <property type="match status" value="3"/>
</dbReference>
<dbReference type="Gene3D" id="3.40.1110.10">
    <property type="entry name" value="Calcium-transporting ATPase, cytoplasmic domain N"/>
    <property type="match status" value="1"/>
</dbReference>
<dbReference type="Gene3D" id="2.70.150.10">
    <property type="entry name" value="Calcium-transporting ATPase, cytoplasmic transduction domain A"/>
    <property type="match status" value="1"/>
</dbReference>
<dbReference type="Gene3D" id="1.20.1110.10">
    <property type="entry name" value="Calcium-transporting ATPase, transmembrane domain"/>
    <property type="match status" value="1"/>
</dbReference>
<dbReference type="Gene3D" id="3.40.50.1000">
    <property type="entry name" value="HAD superfamily/HAD-like"/>
    <property type="match status" value="1"/>
</dbReference>
<dbReference type="InterPro" id="IPR006068">
    <property type="entry name" value="ATPase_P-typ_cation-transptr_C"/>
</dbReference>
<dbReference type="InterPro" id="IPR004014">
    <property type="entry name" value="ATPase_P-typ_cation-transptr_N"/>
</dbReference>
<dbReference type="InterPro" id="IPR023299">
    <property type="entry name" value="ATPase_P-typ_cyto_dom_N"/>
</dbReference>
<dbReference type="InterPro" id="IPR018303">
    <property type="entry name" value="ATPase_P-typ_P_site"/>
</dbReference>
<dbReference type="InterPro" id="IPR023298">
    <property type="entry name" value="ATPase_P-typ_TM_dom_sf"/>
</dbReference>
<dbReference type="InterPro" id="IPR008250">
    <property type="entry name" value="ATPase_P-typ_transduc_dom_A_sf"/>
</dbReference>
<dbReference type="InterPro" id="IPR036412">
    <property type="entry name" value="HAD-like_sf"/>
</dbReference>
<dbReference type="InterPro" id="IPR023214">
    <property type="entry name" value="HAD_sf"/>
</dbReference>
<dbReference type="InterPro" id="IPR005782">
    <property type="entry name" value="P-type_ATPase_IIA"/>
</dbReference>
<dbReference type="InterPro" id="IPR001757">
    <property type="entry name" value="P_typ_ATPase"/>
</dbReference>
<dbReference type="InterPro" id="IPR044492">
    <property type="entry name" value="P_typ_ATPase_HD_dom"/>
</dbReference>
<dbReference type="NCBIfam" id="TIGR01116">
    <property type="entry name" value="ATPase-IIA1_Ca"/>
    <property type="match status" value="1"/>
</dbReference>
<dbReference type="NCBIfam" id="TIGR01494">
    <property type="entry name" value="ATPase_P-type"/>
    <property type="match status" value="2"/>
</dbReference>
<dbReference type="PANTHER" id="PTHR42861">
    <property type="entry name" value="CALCIUM-TRANSPORTING ATPASE"/>
    <property type="match status" value="1"/>
</dbReference>
<dbReference type="Pfam" id="PF13246">
    <property type="entry name" value="Cation_ATPase"/>
    <property type="match status" value="1"/>
</dbReference>
<dbReference type="Pfam" id="PF00689">
    <property type="entry name" value="Cation_ATPase_C"/>
    <property type="match status" value="1"/>
</dbReference>
<dbReference type="Pfam" id="PF00690">
    <property type="entry name" value="Cation_ATPase_N"/>
    <property type="match status" value="1"/>
</dbReference>
<dbReference type="Pfam" id="PF00122">
    <property type="entry name" value="E1-E2_ATPase"/>
    <property type="match status" value="1"/>
</dbReference>
<dbReference type="Pfam" id="PF00702">
    <property type="entry name" value="Hydrolase"/>
    <property type="match status" value="1"/>
</dbReference>
<dbReference type="PRINTS" id="PR00119">
    <property type="entry name" value="CATATPASE"/>
</dbReference>
<dbReference type="PRINTS" id="PR00120">
    <property type="entry name" value="HATPASE"/>
</dbReference>
<dbReference type="SFLD" id="SFLDG00002">
    <property type="entry name" value="C1.7:_P-type_atpase_like"/>
    <property type="match status" value="1"/>
</dbReference>
<dbReference type="SFLD" id="SFLDF00027">
    <property type="entry name" value="p-type_atpase"/>
    <property type="match status" value="1"/>
</dbReference>
<dbReference type="SMART" id="SM00831">
    <property type="entry name" value="Cation_ATPase_N"/>
    <property type="match status" value="1"/>
</dbReference>
<dbReference type="SUPFAM" id="SSF81653">
    <property type="entry name" value="Calcium ATPase, transduction domain A"/>
    <property type="match status" value="1"/>
</dbReference>
<dbReference type="SUPFAM" id="SSF81665">
    <property type="entry name" value="Calcium ATPase, transmembrane domain M"/>
    <property type="match status" value="1"/>
</dbReference>
<dbReference type="SUPFAM" id="SSF56784">
    <property type="entry name" value="HAD-like"/>
    <property type="match status" value="1"/>
</dbReference>
<dbReference type="SUPFAM" id="SSF81660">
    <property type="entry name" value="Metal cation-transporting ATPase, ATP-binding domain N"/>
    <property type="match status" value="1"/>
</dbReference>
<dbReference type="PROSITE" id="PS00154">
    <property type="entry name" value="ATPASE_E1_E2"/>
    <property type="match status" value="1"/>
</dbReference>
<name>AT2A2_RABIT</name>
<reference key="1">
    <citation type="journal article" date="1989" name="J. Biol. Chem.">
        <title>Molecular cloning of the mammalian smooth muscle sarco(endo)plasmic reticulum Ca2+-ATPase.</title>
        <authorList>
            <person name="Lytton J."/>
            <person name="Zarain-Herzberg A."/>
            <person name="Periasamy M."/>
            <person name="McLennan D.H."/>
        </authorList>
    </citation>
    <scope>NUCLEOTIDE SEQUENCE [MRNA] (ISOFORM 1)</scope>
    <source>
        <tissue>Smooth muscle</tissue>
    </source>
</reference>
<reference key="2">
    <citation type="journal article" date="1990" name="Nucleic Acids Res.">
        <title>Cloning of internal Ca pump from rabbit stomach smooth muscle.</title>
        <authorList>
            <person name="Khan I."/>
            <person name="Grover A.K."/>
        </authorList>
    </citation>
    <scope>NUCLEOTIDE SEQUENCE [MRNA] (ISOFORM 1)</scope>
    <source>
        <tissue>Smooth muscle</tissue>
    </source>
</reference>
<reference key="3">
    <citation type="journal article" date="1985" name="Nature">
        <title>Amino-acid sequence of a Ca2+ + Mg2+-dependent ATPase from rabbit muscle sarcoplasmic reticulum, deduced from its complementary DNA sequence.</title>
        <authorList>
            <person name="McLennan D.H."/>
            <person name="Brandl C.J."/>
            <person name="Korczak B."/>
            <person name="Green N.M."/>
        </authorList>
    </citation>
    <scope>NUCLEOTIDE SEQUENCE [MRNA] (ISOFORM 2)</scope>
</reference>
<keyword id="KW-0025">Alternative splicing</keyword>
<keyword id="KW-0067">ATP-binding</keyword>
<keyword id="KW-0106">Calcium</keyword>
<keyword id="KW-0109">Calcium transport</keyword>
<keyword id="KW-1015">Disulfide bond</keyword>
<keyword id="KW-0256">Endoplasmic reticulum</keyword>
<keyword id="KW-0406">Ion transport</keyword>
<keyword id="KW-0460">Magnesium</keyword>
<keyword id="KW-0472">Membrane</keyword>
<keyword id="KW-0479">Metal-binding</keyword>
<keyword id="KW-0944">Nitration</keyword>
<keyword id="KW-0547">Nucleotide-binding</keyword>
<keyword id="KW-0597">Phosphoprotein</keyword>
<keyword id="KW-1185">Reference proteome</keyword>
<keyword id="KW-0703">Sarcoplasmic reticulum</keyword>
<keyword id="KW-1278">Translocase</keyword>
<keyword id="KW-0812">Transmembrane</keyword>
<keyword id="KW-1133">Transmembrane helix</keyword>
<keyword id="KW-0813">Transport</keyword>
<organism>
    <name type="scientific">Oryctolagus cuniculus</name>
    <name type="common">Rabbit</name>
    <dbReference type="NCBI Taxonomy" id="9986"/>
    <lineage>
        <taxon>Eukaryota</taxon>
        <taxon>Metazoa</taxon>
        <taxon>Chordata</taxon>
        <taxon>Craniata</taxon>
        <taxon>Vertebrata</taxon>
        <taxon>Euteleostomi</taxon>
        <taxon>Mammalia</taxon>
        <taxon>Eutheria</taxon>
        <taxon>Euarchontoglires</taxon>
        <taxon>Glires</taxon>
        <taxon>Lagomorpha</taxon>
        <taxon>Leporidae</taxon>
        <taxon>Oryctolagus</taxon>
    </lineage>
</organism>